<accession>B5ZYS7</accession>
<dbReference type="EC" id="2.7.7.6" evidence="1"/>
<dbReference type="EMBL" id="CP001191">
    <property type="protein sequence ID" value="ACI54618.1"/>
    <property type="molecule type" value="Genomic_DNA"/>
</dbReference>
<dbReference type="RefSeq" id="WP_003587202.1">
    <property type="nucleotide sequence ID" value="NC_011369.1"/>
</dbReference>
<dbReference type="SMR" id="B5ZYS7"/>
<dbReference type="STRING" id="395492.Rleg2_1324"/>
<dbReference type="KEGG" id="rlt:Rleg2_1324"/>
<dbReference type="eggNOG" id="COG0085">
    <property type="taxonomic scope" value="Bacteria"/>
</dbReference>
<dbReference type="HOGENOM" id="CLU_000524_4_3_5"/>
<dbReference type="Proteomes" id="UP000008330">
    <property type="component" value="Chromosome"/>
</dbReference>
<dbReference type="GO" id="GO:0000428">
    <property type="term" value="C:DNA-directed RNA polymerase complex"/>
    <property type="evidence" value="ECO:0007669"/>
    <property type="project" value="UniProtKB-KW"/>
</dbReference>
<dbReference type="GO" id="GO:0003677">
    <property type="term" value="F:DNA binding"/>
    <property type="evidence" value="ECO:0007669"/>
    <property type="project" value="UniProtKB-UniRule"/>
</dbReference>
<dbReference type="GO" id="GO:0003899">
    <property type="term" value="F:DNA-directed RNA polymerase activity"/>
    <property type="evidence" value="ECO:0007669"/>
    <property type="project" value="UniProtKB-UniRule"/>
</dbReference>
<dbReference type="GO" id="GO:0032549">
    <property type="term" value="F:ribonucleoside binding"/>
    <property type="evidence" value="ECO:0007669"/>
    <property type="project" value="InterPro"/>
</dbReference>
<dbReference type="GO" id="GO:0006351">
    <property type="term" value="P:DNA-templated transcription"/>
    <property type="evidence" value="ECO:0007669"/>
    <property type="project" value="UniProtKB-UniRule"/>
</dbReference>
<dbReference type="CDD" id="cd00653">
    <property type="entry name" value="RNA_pol_B_RPB2"/>
    <property type="match status" value="1"/>
</dbReference>
<dbReference type="FunFam" id="2.40.50.100:FF:000006">
    <property type="entry name" value="DNA-directed RNA polymerase subunit beta"/>
    <property type="match status" value="1"/>
</dbReference>
<dbReference type="FunFam" id="3.90.1800.10:FF:000001">
    <property type="entry name" value="DNA-directed RNA polymerase subunit beta"/>
    <property type="match status" value="1"/>
</dbReference>
<dbReference type="Gene3D" id="2.40.50.100">
    <property type="match status" value="1"/>
</dbReference>
<dbReference type="Gene3D" id="2.40.50.150">
    <property type="match status" value="1"/>
</dbReference>
<dbReference type="Gene3D" id="3.90.1100.10">
    <property type="match status" value="2"/>
</dbReference>
<dbReference type="Gene3D" id="2.30.150.10">
    <property type="entry name" value="DNA-directed RNA polymerase, beta subunit, external 1 domain"/>
    <property type="match status" value="1"/>
</dbReference>
<dbReference type="Gene3D" id="2.40.270.10">
    <property type="entry name" value="DNA-directed RNA polymerase, subunit 2, domain 6"/>
    <property type="match status" value="1"/>
</dbReference>
<dbReference type="Gene3D" id="3.90.1800.10">
    <property type="entry name" value="RNA polymerase alpha subunit dimerisation domain"/>
    <property type="match status" value="1"/>
</dbReference>
<dbReference type="Gene3D" id="3.90.1110.10">
    <property type="entry name" value="RNA polymerase Rpb2, domain 2"/>
    <property type="match status" value="1"/>
</dbReference>
<dbReference type="HAMAP" id="MF_01321">
    <property type="entry name" value="RNApol_bact_RpoB"/>
    <property type="match status" value="1"/>
</dbReference>
<dbReference type="InterPro" id="IPR042107">
    <property type="entry name" value="DNA-dir_RNA_pol_bsu_ext_1_sf"/>
</dbReference>
<dbReference type="InterPro" id="IPR019462">
    <property type="entry name" value="DNA-dir_RNA_pol_bsu_external_1"/>
</dbReference>
<dbReference type="InterPro" id="IPR015712">
    <property type="entry name" value="DNA-dir_RNA_pol_su2"/>
</dbReference>
<dbReference type="InterPro" id="IPR007120">
    <property type="entry name" value="DNA-dir_RNAP_su2_dom"/>
</dbReference>
<dbReference type="InterPro" id="IPR037033">
    <property type="entry name" value="DNA-dir_RNAP_su2_hyb_sf"/>
</dbReference>
<dbReference type="InterPro" id="IPR010243">
    <property type="entry name" value="RNA_pol_bsu_bac"/>
</dbReference>
<dbReference type="InterPro" id="IPR007121">
    <property type="entry name" value="RNA_pol_bsu_CS"/>
</dbReference>
<dbReference type="InterPro" id="IPR007644">
    <property type="entry name" value="RNA_pol_bsu_protrusion"/>
</dbReference>
<dbReference type="InterPro" id="IPR007642">
    <property type="entry name" value="RNA_pol_Rpb2_2"/>
</dbReference>
<dbReference type="InterPro" id="IPR037034">
    <property type="entry name" value="RNA_pol_Rpb2_2_sf"/>
</dbReference>
<dbReference type="InterPro" id="IPR007645">
    <property type="entry name" value="RNA_pol_Rpb2_3"/>
</dbReference>
<dbReference type="InterPro" id="IPR007641">
    <property type="entry name" value="RNA_pol_Rpb2_7"/>
</dbReference>
<dbReference type="InterPro" id="IPR014724">
    <property type="entry name" value="RNA_pol_RPB2_OB-fold"/>
</dbReference>
<dbReference type="NCBIfam" id="NF001616">
    <property type="entry name" value="PRK00405.1"/>
    <property type="match status" value="1"/>
</dbReference>
<dbReference type="NCBIfam" id="TIGR02013">
    <property type="entry name" value="rpoB"/>
    <property type="match status" value="1"/>
</dbReference>
<dbReference type="PANTHER" id="PTHR20856">
    <property type="entry name" value="DNA-DIRECTED RNA POLYMERASE I SUBUNIT 2"/>
    <property type="match status" value="1"/>
</dbReference>
<dbReference type="Pfam" id="PF04563">
    <property type="entry name" value="RNA_pol_Rpb2_1"/>
    <property type="match status" value="1"/>
</dbReference>
<dbReference type="Pfam" id="PF04561">
    <property type="entry name" value="RNA_pol_Rpb2_2"/>
    <property type="match status" value="2"/>
</dbReference>
<dbReference type="Pfam" id="PF04565">
    <property type="entry name" value="RNA_pol_Rpb2_3"/>
    <property type="match status" value="1"/>
</dbReference>
<dbReference type="Pfam" id="PF10385">
    <property type="entry name" value="RNA_pol_Rpb2_45"/>
    <property type="match status" value="1"/>
</dbReference>
<dbReference type="Pfam" id="PF00562">
    <property type="entry name" value="RNA_pol_Rpb2_6"/>
    <property type="match status" value="1"/>
</dbReference>
<dbReference type="Pfam" id="PF04560">
    <property type="entry name" value="RNA_pol_Rpb2_7"/>
    <property type="match status" value="1"/>
</dbReference>
<dbReference type="SUPFAM" id="SSF64484">
    <property type="entry name" value="beta and beta-prime subunits of DNA dependent RNA-polymerase"/>
    <property type="match status" value="1"/>
</dbReference>
<dbReference type="PROSITE" id="PS01166">
    <property type="entry name" value="RNA_POL_BETA"/>
    <property type="match status" value="1"/>
</dbReference>
<sequence length="1379" mass="153428">MAQTLSFNGRRRVRKFFGKIPEVAEMPNLIEVQKASYDQFLMVEEPKGGRPDEGLQAVFKSVFPITDFSGASMLEFVSYEFEPPKFDVDECRQRDLTYAAPLKVTLRLIVFDIDEDTGAKSIKDIKEQSVYMGDMPLMTNNGTFIVNGTERVIVSQMHRSPGVFFDHDKGKSHSSGKLLFAARVIPYRGSWLDIEFDAKDIVYARIDRRRKIPVTSLLMALGMDGEEILDTFYTKSLYKRDGEGWRIPFKPETLKGAKAITEMVDADTGEVVVEAGKKLTPRLLRQLSDKGLKALKAADDDLYGNYLAGDIVNYSTGEIYLEAGDEIDEKTLGIILANGFDEIPVLGIDHINVGAYIRNTLSADKNENRQDALFDIYRVMRPGEPPTMESAEAMFNSLFFDAERYDLSAVGRVKMNMRLDLTVEDTVRILRKDDILAVVRMLVELRDGKGEIDDIDNLGNRRVRSVGELMENQYRLGLLRMERAIKERMSSIEIDTVMPQDLINAKPAAAAVREFFGSSQLSQFMDQVNPLSEITHKRRLSALGPGGLTRERAGFEVRDVHPTHYGRICPIETPEGPNIGLINSLATFARVNKYGFIESPYRRIVDGRVTSDVLYLSAMEEAKYYVAQANAEMNADGSFVDEFVVCRHAGEVMLAPRDSMNLMDVSPKQVVSVAAALIPFLENDDANRALMGSNMQRQAVPLLRAEAPFVGTGMEPVVARDSGAAIGARRGGVVDQVDATRIVIRATEDLEAGKSGVDIYRLQKFQRSNQNTCVNQRPLVTVGDEVNRGDILADGPSTDLGDLALGRNALVAFMPWNGYNYEDSILLSERIVADDVFTSIHIEEFEVMARDTKLGPEEITRDIPNVSEEALKNLDEAGIVYIGAEVQPGDILVGKITPKGESPMTPEEKLLRAIFGEKASDVRDTSMRMPPGTYGTIVEVRVFNRHGVEKDERAMAIEREEIERLAKDRDDEQAILDRNVYGRLIEMLRGQASIAGPKGFKKGTELSNAVVSEYPRSQWWMFAVEDEKVQSELEALRGQYDESKSRLEQRFMDKVEKVQRGDEMPPGVMKMVKVFVAVKRKIQPGDKMAGRHGNKGVVSRIVPVEDMPFLEDGTHVDVVLNPLGVPSRMNVGQILETHLGWACAGMGRQIGELIDAYKANGNIEPLRKTIGDVVGDGPKAEQVQDFDDDSVLRLADQWKRGVSIATPVFDGANEADVNDMLRLAGLKDTGQSTLYDGRTGEQFDRQVTVGYIYMLKLNHLVDDKIHARSIGPYSLVTQQPLGGKAQFGGQRFGEMEVWALEAYGAAYTLQEMLTVKSDDVAGRTKVYEAIVRGDDTFEAGIPESFNVLVKEMRSLGLSVELENTKLDEAQAAQLPDAAE</sequence>
<gene>
    <name evidence="1" type="primary">rpoB</name>
    <name type="ordered locus">Rleg2_1324</name>
</gene>
<comment type="function">
    <text evidence="1">DNA-dependent RNA polymerase catalyzes the transcription of DNA into RNA using the four ribonucleoside triphosphates as substrates.</text>
</comment>
<comment type="catalytic activity">
    <reaction evidence="1">
        <text>RNA(n) + a ribonucleoside 5'-triphosphate = RNA(n+1) + diphosphate</text>
        <dbReference type="Rhea" id="RHEA:21248"/>
        <dbReference type="Rhea" id="RHEA-COMP:14527"/>
        <dbReference type="Rhea" id="RHEA-COMP:17342"/>
        <dbReference type="ChEBI" id="CHEBI:33019"/>
        <dbReference type="ChEBI" id="CHEBI:61557"/>
        <dbReference type="ChEBI" id="CHEBI:140395"/>
        <dbReference type="EC" id="2.7.7.6"/>
    </reaction>
</comment>
<comment type="subunit">
    <text evidence="1">The RNAP catalytic core consists of 2 alpha, 1 beta, 1 beta' and 1 omega subunit. When a sigma factor is associated with the core the holoenzyme is formed, which can initiate transcription.</text>
</comment>
<comment type="similarity">
    <text evidence="1">Belongs to the RNA polymerase beta chain family.</text>
</comment>
<keyword id="KW-0240">DNA-directed RNA polymerase</keyword>
<keyword id="KW-0548">Nucleotidyltransferase</keyword>
<keyword id="KW-1185">Reference proteome</keyword>
<keyword id="KW-0804">Transcription</keyword>
<keyword id="KW-0808">Transferase</keyword>
<proteinExistence type="inferred from homology"/>
<organism>
    <name type="scientific">Rhizobium leguminosarum bv. trifolii (strain WSM2304)</name>
    <dbReference type="NCBI Taxonomy" id="395492"/>
    <lineage>
        <taxon>Bacteria</taxon>
        <taxon>Pseudomonadati</taxon>
        <taxon>Pseudomonadota</taxon>
        <taxon>Alphaproteobacteria</taxon>
        <taxon>Hyphomicrobiales</taxon>
        <taxon>Rhizobiaceae</taxon>
        <taxon>Rhizobium/Agrobacterium group</taxon>
        <taxon>Rhizobium</taxon>
    </lineage>
</organism>
<name>RPOB_RHILW</name>
<reference key="1">
    <citation type="journal article" date="2010" name="Stand. Genomic Sci.">
        <title>Complete genome sequence of Rhizobium leguminosarum bv trifolii strain WSM2304, an effective microsymbiont of the South American clover Trifolium polymorphum.</title>
        <authorList>
            <person name="Reeve W."/>
            <person name="O'Hara G."/>
            <person name="Chain P."/>
            <person name="Ardley J."/>
            <person name="Brau L."/>
            <person name="Nandesena K."/>
            <person name="Tiwari R."/>
            <person name="Malfatti S."/>
            <person name="Kiss H."/>
            <person name="Lapidus A."/>
            <person name="Copeland A."/>
            <person name="Nolan M."/>
            <person name="Land M."/>
            <person name="Ivanova N."/>
            <person name="Mavromatis K."/>
            <person name="Markowitz V."/>
            <person name="Kyrpides N."/>
            <person name="Melino V."/>
            <person name="Denton M."/>
            <person name="Yates R."/>
            <person name="Howieson J."/>
        </authorList>
    </citation>
    <scope>NUCLEOTIDE SEQUENCE [LARGE SCALE GENOMIC DNA]</scope>
    <source>
        <strain>WSM2304</strain>
    </source>
</reference>
<feature type="chain" id="PRO_1000141726" description="DNA-directed RNA polymerase subunit beta">
    <location>
        <begin position="1"/>
        <end position="1379"/>
    </location>
</feature>
<evidence type="ECO:0000255" key="1">
    <source>
        <dbReference type="HAMAP-Rule" id="MF_01321"/>
    </source>
</evidence>
<protein>
    <recommendedName>
        <fullName evidence="1">DNA-directed RNA polymerase subunit beta</fullName>
        <shortName evidence="1">RNAP subunit beta</shortName>
        <ecNumber evidence="1">2.7.7.6</ecNumber>
    </recommendedName>
    <alternativeName>
        <fullName evidence="1">RNA polymerase subunit beta</fullName>
    </alternativeName>
    <alternativeName>
        <fullName evidence="1">Transcriptase subunit beta</fullName>
    </alternativeName>
</protein>